<reference key="1">
    <citation type="submission" date="2009-01" db="EMBL/GenBank/DDBJ databases">
        <title>Complete sequence of Diaphorobacter sp. TPSY.</title>
        <authorList>
            <consortium name="US DOE Joint Genome Institute"/>
            <person name="Lucas S."/>
            <person name="Copeland A."/>
            <person name="Lapidus A."/>
            <person name="Glavina del Rio T."/>
            <person name="Tice H."/>
            <person name="Bruce D."/>
            <person name="Goodwin L."/>
            <person name="Pitluck S."/>
            <person name="Chertkov O."/>
            <person name="Brettin T."/>
            <person name="Detter J.C."/>
            <person name="Han C."/>
            <person name="Larimer F."/>
            <person name="Land M."/>
            <person name="Hauser L."/>
            <person name="Kyrpides N."/>
            <person name="Mikhailova N."/>
            <person name="Coates J.D."/>
        </authorList>
    </citation>
    <scope>NUCLEOTIDE SEQUENCE [LARGE SCALE GENOMIC DNA]</scope>
    <source>
        <strain>TPSY</strain>
    </source>
</reference>
<dbReference type="EC" id="1.1.1.37" evidence="1"/>
<dbReference type="EMBL" id="CP001392">
    <property type="protein sequence ID" value="ACM33719.1"/>
    <property type="molecule type" value="Genomic_DNA"/>
</dbReference>
<dbReference type="RefSeq" id="WP_015913700.1">
    <property type="nucleotide sequence ID" value="NC_011992.1"/>
</dbReference>
<dbReference type="SMR" id="B9MBP0"/>
<dbReference type="KEGG" id="dia:Dtpsy_2281"/>
<dbReference type="eggNOG" id="COG0039">
    <property type="taxonomic scope" value="Bacteria"/>
</dbReference>
<dbReference type="HOGENOM" id="CLU_040727_2_0_4"/>
<dbReference type="Proteomes" id="UP000000450">
    <property type="component" value="Chromosome"/>
</dbReference>
<dbReference type="GO" id="GO:0030060">
    <property type="term" value="F:L-malate dehydrogenase (NAD+) activity"/>
    <property type="evidence" value="ECO:0007669"/>
    <property type="project" value="UniProtKB-UniRule"/>
</dbReference>
<dbReference type="GO" id="GO:0006108">
    <property type="term" value="P:malate metabolic process"/>
    <property type="evidence" value="ECO:0007669"/>
    <property type="project" value="InterPro"/>
</dbReference>
<dbReference type="GO" id="GO:0006099">
    <property type="term" value="P:tricarboxylic acid cycle"/>
    <property type="evidence" value="ECO:0007669"/>
    <property type="project" value="UniProtKB-UniRule"/>
</dbReference>
<dbReference type="CDD" id="cd01338">
    <property type="entry name" value="MDH_chloroplast-like"/>
    <property type="match status" value="1"/>
</dbReference>
<dbReference type="FunFam" id="3.40.50.720:FF:000010">
    <property type="entry name" value="Malate dehydrogenase"/>
    <property type="match status" value="1"/>
</dbReference>
<dbReference type="FunFam" id="3.90.110.10:FF:000002">
    <property type="entry name" value="Malate dehydrogenase"/>
    <property type="match status" value="1"/>
</dbReference>
<dbReference type="Gene3D" id="3.90.110.10">
    <property type="entry name" value="Lactate dehydrogenase/glycoside hydrolase, family 4, C-terminal"/>
    <property type="match status" value="1"/>
</dbReference>
<dbReference type="Gene3D" id="3.40.50.720">
    <property type="entry name" value="NAD(P)-binding Rossmann-like Domain"/>
    <property type="match status" value="1"/>
</dbReference>
<dbReference type="HAMAP" id="MF_01517">
    <property type="entry name" value="Malate_dehydrog_2"/>
    <property type="match status" value="1"/>
</dbReference>
<dbReference type="InterPro" id="IPR001557">
    <property type="entry name" value="L-lactate/malate_DH"/>
</dbReference>
<dbReference type="InterPro" id="IPR022383">
    <property type="entry name" value="Lactate/malate_DH_C"/>
</dbReference>
<dbReference type="InterPro" id="IPR001236">
    <property type="entry name" value="Lactate/malate_DH_N"/>
</dbReference>
<dbReference type="InterPro" id="IPR015955">
    <property type="entry name" value="Lactate_DH/Glyco_Ohase_4_C"/>
</dbReference>
<dbReference type="InterPro" id="IPR010945">
    <property type="entry name" value="Malate_DH_type2"/>
</dbReference>
<dbReference type="InterPro" id="IPR036291">
    <property type="entry name" value="NAD(P)-bd_dom_sf"/>
</dbReference>
<dbReference type="NCBIfam" id="TIGR01759">
    <property type="entry name" value="MalateDH-SF1"/>
    <property type="match status" value="1"/>
</dbReference>
<dbReference type="NCBIfam" id="NF003916">
    <property type="entry name" value="PRK05442.1"/>
    <property type="match status" value="1"/>
</dbReference>
<dbReference type="PANTHER" id="PTHR23382">
    <property type="entry name" value="MALATE DEHYDROGENASE"/>
    <property type="match status" value="1"/>
</dbReference>
<dbReference type="Pfam" id="PF02866">
    <property type="entry name" value="Ldh_1_C"/>
    <property type="match status" value="1"/>
</dbReference>
<dbReference type="Pfam" id="PF00056">
    <property type="entry name" value="Ldh_1_N"/>
    <property type="match status" value="1"/>
</dbReference>
<dbReference type="PIRSF" id="PIRSF000102">
    <property type="entry name" value="Lac_mal_DH"/>
    <property type="match status" value="1"/>
</dbReference>
<dbReference type="SUPFAM" id="SSF56327">
    <property type="entry name" value="LDH C-terminal domain-like"/>
    <property type="match status" value="1"/>
</dbReference>
<dbReference type="SUPFAM" id="SSF51735">
    <property type="entry name" value="NAD(P)-binding Rossmann-fold domains"/>
    <property type="match status" value="1"/>
</dbReference>
<proteinExistence type="inferred from homology"/>
<name>MDH_ACIET</name>
<protein>
    <recommendedName>
        <fullName evidence="1">Malate dehydrogenase</fullName>
        <ecNumber evidence="1">1.1.1.37</ecNumber>
    </recommendedName>
</protein>
<sequence length="328" mass="34794">MSKKPVRVAVTGAAGQIGYALLFRIASGEMLGKDQPVILQLLEIPDEKAQNALKGVIMELEDCAFPLLAGIEAHSDPMTAFKDTDYALLVGARPRGPGMERADLLAANAQIFTAQGKALNAVASRNVKVLVVGNPANTNAYIAMKSAPDLPAKNFTAMLRLDHNRAASQLAAKGGFKVGDIKKLTVWGNHSPTMYADYRFATVDGKSVKDAINDQAWNKDVFLPTVGKRGAAIIAARGLSSAASAANAAIDHMRDWALGSKGEWVTMGVPSNGEYGIPAGIVFGFPVTTENGEYKIVEGLAIDAFSQECIDKTLAELQGEQDGVKHLL</sequence>
<evidence type="ECO:0000255" key="1">
    <source>
        <dbReference type="HAMAP-Rule" id="MF_01517"/>
    </source>
</evidence>
<keyword id="KW-0520">NAD</keyword>
<keyword id="KW-0560">Oxidoreductase</keyword>
<keyword id="KW-1185">Reference proteome</keyword>
<keyword id="KW-0816">Tricarboxylic acid cycle</keyword>
<organism>
    <name type="scientific">Acidovorax ebreus (strain TPSY)</name>
    <name type="common">Diaphorobacter sp. (strain TPSY)</name>
    <dbReference type="NCBI Taxonomy" id="535289"/>
    <lineage>
        <taxon>Bacteria</taxon>
        <taxon>Pseudomonadati</taxon>
        <taxon>Pseudomonadota</taxon>
        <taxon>Betaproteobacteria</taxon>
        <taxon>Burkholderiales</taxon>
        <taxon>Comamonadaceae</taxon>
        <taxon>Diaphorobacter</taxon>
    </lineage>
</organism>
<gene>
    <name evidence="1" type="primary">mdh</name>
    <name type="ordered locus">Dtpsy_2281</name>
</gene>
<comment type="function">
    <text evidence="1">Catalyzes the reversible oxidation of malate to oxaloacetate.</text>
</comment>
<comment type="catalytic activity">
    <reaction evidence="1">
        <text>(S)-malate + NAD(+) = oxaloacetate + NADH + H(+)</text>
        <dbReference type="Rhea" id="RHEA:21432"/>
        <dbReference type="ChEBI" id="CHEBI:15378"/>
        <dbReference type="ChEBI" id="CHEBI:15589"/>
        <dbReference type="ChEBI" id="CHEBI:16452"/>
        <dbReference type="ChEBI" id="CHEBI:57540"/>
        <dbReference type="ChEBI" id="CHEBI:57945"/>
        <dbReference type="EC" id="1.1.1.37"/>
    </reaction>
</comment>
<comment type="similarity">
    <text evidence="1">Belongs to the LDH/MDH superfamily. MDH type 2 family.</text>
</comment>
<feature type="chain" id="PRO_1000185082" description="Malate dehydrogenase">
    <location>
        <begin position="1"/>
        <end position="328"/>
    </location>
</feature>
<feature type="active site" description="Proton acceptor" evidence="1">
    <location>
        <position position="190"/>
    </location>
</feature>
<feature type="binding site" evidence="1">
    <location>
        <begin position="12"/>
        <end position="18"/>
    </location>
    <ligand>
        <name>NAD(+)</name>
        <dbReference type="ChEBI" id="CHEBI:57540"/>
    </ligand>
</feature>
<feature type="binding site" evidence="1">
    <location>
        <position position="95"/>
    </location>
    <ligand>
        <name>substrate</name>
    </ligand>
</feature>
<feature type="binding site" evidence="1">
    <location>
        <position position="101"/>
    </location>
    <ligand>
        <name>substrate</name>
    </ligand>
</feature>
<feature type="binding site" evidence="1">
    <location>
        <position position="108"/>
    </location>
    <ligand>
        <name>NAD(+)</name>
        <dbReference type="ChEBI" id="CHEBI:57540"/>
    </ligand>
</feature>
<feature type="binding site" evidence="1">
    <location>
        <position position="115"/>
    </location>
    <ligand>
        <name>NAD(+)</name>
        <dbReference type="ChEBI" id="CHEBI:57540"/>
    </ligand>
</feature>
<feature type="binding site" evidence="1">
    <location>
        <begin position="132"/>
        <end position="134"/>
    </location>
    <ligand>
        <name>NAD(+)</name>
        <dbReference type="ChEBI" id="CHEBI:57540"/>
    </ligand>
</feature>
<feature type="binding site" evidence="1">
    <location>
        <position position="134"/>
    </location>
    <ligand>
        <name>substrate</name>
    </ligand>
</feature>
<feature type="binding site" evidence="1">
    <location>
        <position position="165"/>
    </location>
    <ligand>
        <name>substrate</name>
    </ligand>
</feature>
<accession>B9MBP0</accession>